<accession>B8EJZ2</accession>
<sequence>MSIDSLKGQLPDFAKDVRLNLGSIANDDSLKEQTKYGLLLACALASRNAEVAAAFDREAASHLTPEARDAARAAATIMGMNNVYYRFVHLASNPVYKTMPAKLRMGVIGSPGVPKTDFELWCLAVSAINGCGMCIDAHEKVLADAGVTQEVIQTAVRFAAIVQSAAIALEAAQLPAFA</sequence>
<dbReference type="EC" id="1.11.1.28" evidence="2"/>
<dbReference type="EMBL" id="CP001280">
    <property type="protein sequence ID" value="ACK49939.1"/>
    <property type="molecule type" value="Genomic_DNA"/>
</dbReference>
<dbReference type="RefSeq" id="WP_012590009.1">
    <property type="nucleotide sequence ID" value="NC_011666.1"/>
</dbReference>
<dbReference type="SMR" id="B8EJZ2"/>
<dbReference type="STRING" id="395965.Msil_0970"/>
<dbReference type="KEGG" id="msl:Msil_0970"/>
<dbReference type="eggNOG" id="COG2128">
    <property type="taxonomic scope" value="Bacteria"/>
</dbReference>
<dbReference type="HOGENOM" id="CLU_105328_0_0_5"/>
<dbReference type="OrthoDB" id="9801997at2"/>
<dbReference type="Proteomes" id="UP000002257">
    <property type="component" value="Chromosome"/>
</dbReference>
<dbReference type="GO" id="GO:0008785">
    <property type="term" value="F:alkyl hydroperoxide reductase activity"/>
    <property type="evidence" value="ECO:0007669"/>
    <property type="project" value="UniProtKB-UniRule"/>
</dbReference>
<dbReference type="GO" id="GO:0015036">
    <property type="term" value="F:disulfide oxidoreductase activity"/>
    <property type="evidence" value="ECO:0007669"/>
    <property type="project" value="TreeGrafter"/>
</dbReference>
<dbReference type="GO" id="GO:0032843">
    <property type="term" value="F:hydroperoxide reductase activity"/>
    <property type="evidence" value="ECO:0007669"/>
    <property type="project" value="InterPro"/>
</dbReference>
<dbReference type="GO" id="GO:0051920">
    <property type="term" value="F:peroxiredoxin activity"/>
    <property type="evidence" value="ECO:0007669"/>
    <property type="project" value="InterPro"/>
</dbReference>
<dbReference type="GO" id="GO:0045454">
    <property type="term" value="P:cell redox homeostasis"/>
    <property type="evidence" value="ECO:0007669"/>
    <property type="project" value="TreeGrafter"/>
</dbReference>
<dbReference type="GO" id="GO:0006979">
    <property type="term" value="P:response to oxidative stress"/>
    <property type="evidence" value="ECO:0007669"/>
    <property type="project" value="InterPro"/>
</dbReference>
<dbReference type="Gene3D" id="1.20.1290.10">
    <property type="entry name" value="AhpD-like"/>
    <property type="match status" value="1"/>
</dbReference>
<dbReference type="HAMAP" id="MF_01676">
    <property type="entry name" value="AhpD"/>
    <property type="match status" value="1"/>
</dbReference>
<dbReference type="InterPro" id="IPR004674">
    <property type="entry name" value="AhpD"/>
</dbReference>
<dbReference type="InterPro" id="IPR029032">
    <property type="entry name" value="AhpD-like"/>
</dbReference>
<dbReference type="InterPro" id="IPR004675">
    <property type="entry name" value="AhpD_core"/>
</dbReference>
<dbReference type="InterPro" id="IPR003779">
    <property type="entry name" value="CMD-like"/>
</dbReference>
<dbReference type="NCBIfam" id="TIGR00777">
    <property type="entry name" value="ahpD"/>
    <property type="match status" value="1"/>
</dbReference>
<dbReference type="NCBIfam" id="TIGR00778">
    <property type="entry name" value="ahpD_dom"/>
    <property type="match status" value="1"/>
</dbReference>
<dbReference type="PANTHER" id="PTHR33930">
    <property type="entry name" value="ALKYL HYDROPEROXIDE REDUCTASE AHPD"/>
    <property type="match status" value="1"/>
</dbReference>
<dbReference type="PANTHER" id="PTHR33930:SF7">
    <property type="entry name" value="ALKYL HYDROPEROXIDE REDUCTASE AHPD"/>
    <property type="match status" value="1"/>
</dbReference>
<dbReference type="Pfam" id="PF02627">
    <property type="entry name" value="CMD"/>
    <property type="match status" value="1"/>
</dbReference>
<dbReference type="SUPFAM" id="SSF69118">
    <property type="entry name" value="AhpD-like"/>
    <property type="match status" value="1"/>
</dbReference>
<feature type="chain" id="PRO_1000187336" description="Alkyl hydroperoxide reductase AhpD">
    <location>
        <begin position="1"/>
        <end position="178"/>
    </location>
</feature>
<feature type="active site" description="Proton donor" evidence="2">
    <location>
        <position position="131"/>
    </location>
</feature>
<feature type="active site" description="Cysteine sulfenic acid (-SOH) intermediate" evidence="2">
    <location>
        <position position="134"/>
    </location>
</feature>
<feature type="disulfide bond" evidence="1">
    <location>
        <begin position="131"/>
        <end position="134"/>
    </location>
</feature>
<feature type="disulfide bond" description="Interchain (with AhpC); in linked form" evidence="2">
    <location>
        <position position="134"/>
    </location>
</feature>
<organism>
    <name type="scientific">Methylocella silvestris (strain DSM 15510 / CIP 108128 / LMG 27833 / NCIMB 13906 / BL2)</name>
    <dbReference type="NCBI Taxonomy" id="395965"/>
    <lineage>
        <taxon>Bacteria</taxon>
        <taxon>Pseudomonadati</taxon>
        <taxon>Pseudomonadota</taxon>
        <taxon>Alphaproteobacteria</taxon>
        <taxon>Hyphomicrobiales</taxon>
        <taxon>Beijerinckiaceae</taxon>
        <taxon>Methylocella</taxon>
    </lineage>
</organism>
<gene>
    <name evidence="2" type="primary">ahpD</name>
    <name type="ordered locus">Msil_0970</name>
</gene>
<protein>
    <recommendedName>
        <fullName evidence="2">Alkyl hydroperoxide reductase AhpD</fullName>
        <ecNumber evidence="2">1.11.1.28</ecNumber>
    </recommendedName>
    <alternativeName>
        <fullName evidence="2">Alkylhydroperoxidase AhpD</fullName>
    </alternativeName>
</protein>
<proteinExistence type="inferred from homology"/>
<keyword id="KW-0049">Antioxidant</keyword>
<keyword id="KW-1015">Disulfide bond</keyword>
<keyword id="KW-0560">Oxidoreductase</keyword>
<keyword id="KW-0575">Peroxidase</keyword>
<keyword id="KW-0676">Redox-active center</keyword>
<keyword id="KW-1185">Reference proteome</keyword>
<reference key="1">
    <citation type="journal article" date="2010" name="J. Bacteriol.">
        <title>Complete genome sequence of the aerobic facultative methanotroph Methylocella silvestris BL2.</title>
        <authorList>
            <person name="Chen Y."/>
            <person name="Crombie A."/>
            <person name="Rahman M.T."/>
            <person name="Dedysh S.N."/>
            <person name="Liesack W."/>
            <person name="Stott M.B."/>
            <person name="Alam M."/>
            <person name="Theisen A.R."/>
            <person name="Murrell J.C."/>
            <person name="Dunfield P.F."/>
        </authorList>
    </citation>
    <scope>NUCLEOTIDE SEQUENCE [LARGE SCALE GENOMIC DNA]</scope>
    <source>
        <strain>DSM 15510 / CIP 108128 / LMG 27833 / NCIMB 13906 / BL2</strain>
    </source>
</reference>
<name>AHPD_METSB</name>
<evidence type="ECO:0000250" key="1"/>
<evidence type="ECO:0000255" key="2">
    <source>
        <dbReference type="HAMAP-Rule" id="MF_01676"/>
    </source>
</evidence>
<comment type="function">
    <text evidence="2">Antioxidant protein with alkyl hydroperoxidase activity. Required for the reduction of the AhpC active site cysteine residues and for the regeneration of the AhpC enzyme activity.</text>
</comment>
<comment type="catalytic activity">
    <reaction evidence="2">
        <text>N(6)-[(R)-dihydrolipoyl]-L-lysyl-[lipoyl-carrier protein] + a hydroperoxide = N(6)-[(R)-lipoyl]-L-lysyl-[lipoyl-carrier protein] + an alcohol + H2O</text>
        <dbReference type="Rhea" id="RHEA:62636"/>
        <dbReference type="Rhea" id="RHEA-COMP:10502"/>
        <dbReference type="Rhea" id="RHEA-COMP:16355"/>
        <dbReference type="ChEBI" id="CHEBI:15377"/>
        <dbReference type="ChEBI" id="CHEBI:30879"/>
        <dbReference type="ChEBI" id="CHEBI:35924"/>
        <dbReference type="ChEBI" id="CHEBI:83099"/>
        <dbReference type="ChEBI" id="CHEBI:83100"/>
        <dbReference type="EC" id="1.11.1.28"/>
    </reaction>
</comment>
<comment type="similarity">
    <text evidence="2">Belongs to the AhpD family.</text>
</comment>